<proteinExistence type="inferred from homology"/>
<evidence type="ECO:0000255" key="1"/>
<evidence type="ECO:0000269" key="2">
    <source>
    </source>
</evidence>
<evidence type="ECO:0000305" key="3"/>
<gene>
    <name type="primary">atg22</name>
    <name type="ORF">SPAC2G11.13</name>
</gene>
<name>ATG22_SCHPO</name>
<comment type="function">
    <text evidence="2">Vacuolar effluxer which mediate the efflux of amino acids resulting from autophagic degradation. The release of autophagic amino acids allows the maintenance of protein synthesis and viability during nitrogen starvation.</text>
</comment>
<comment type="subcellular location">
    <subcellularLocation>
        <location evidence="2">Vacuole membrane</location>
        <topology evidence="2">Multi-pass membrane protein</topology>
    </subcellularLocation>
</comment>
<comment type="similarity">
    <text evidence="3">Belongs to the ATG22 family.</text>
</comment>
<sequence length="529" mass="58642">MNSPIQLHKKFSTTVWHVLSWILYAVGAGPTAIISMGVYVPLIVMKNAHDHGFLRTDHTIPCSLYPEEPCSLNIVGPLWIDVSSIVFAASAISTFLQMAMMVSLGVICDYGNNRRYILFSCVIIGSISGIILSWSPSSFLLGKIVFLILVDLNFIISQSCYDSFLPIFLRFYPITRGPITLESALQDETDDLDSYITNTTIDSSEEEPYLLEHSLILNESAPPADVEDEHKAKIAARLSSVGFGSFFGAAILFQIIFTPILYKTNNNPIILPITVTVCSCWWLILSTPLCTIVTLPVENHSSDAILTLLYNSVKESYHSFKHAMSISSIRLFLFSRLFINCGIQTSLSSAVIFGKARLNLSNFQLTLLGMGISSFALLGTVIIPYLTEYFQLNSLQVVMIISILLPMAPLYGLLGYIPGFENAGIRTSADVFRATLFFGFFLGGAHSYCRSVYAQLVPSGKETRFFALYALISQTGVLFSHISLTLISNYTSDLRAVYIFVIVVMTLPLSSLWIMYQHSKTPNLHRSSS</sequence>
<keyword id="KW-0029">Amino-acid transport</keyword>
<keyword id="KW-0072">Autophagy</keyword>
<keyword id="KW-0325">Glycoprotein</keyword>
<keyword id="KW-0472">Membrane</keyword>
<keyword id="KW-1185">Reference proteome</keyword>
<keyword id="KW-0812">Transmembrane</keyword>
<keyword id="KW-1133">Transmembrane helix</keyword>
<keyword id="KW-0813">Transport</keyword>
<keyword id="KW-0926">Vacuole</keyword>
<organism>
    <name type="scientific">Schizosaccharomyces pombe (strain 972 / ATCC 24843)</name>
    <name type="common">Fission yeast</name>
    <dbReference type="NCBI Taxonomy" id="284812"/>
    <lineage>
        <taxon>Eukaryota</taxon>
        <taxon>Fungi</taxon>
        <taxon>Dikarya</taxon>
        <taxon>Ascomycota</taxon>
        <taxon>Taphrinomycotina</taxon>
        <taxon>Schizosaccharomycetes</taxon>
        <taxon>Schizosaccharomycetales</taxon>
        <taxon>Schizosaccharomycetaceae</taxon>
        <taxon>Schizosaccharomyces</taxon>
    </lineage>
</organism>
<dbReference type="EMBL" id="CU329670">
    <property type="protein sequence ID" value="CAA91178.1"/>
    <property type="molecule type" value="Genomic_DNA"/>
</dbReference>
<dbReference type="PIR" id="T38579">
    <property type="entry name" value="S62468"/>
</dbReference>
<dbReference type="RefSeq" id="NP_593093.1">
    <property type="nucleotide sequence ID" value="NM_001018491.2"/>
</dbReference>
<dbReference type="BioGRID" id="278317">
    <property type="interactions" value="7"/>
</dbReference>
<dbReference type="FunCoup" id="Q09812">
    <property type="interactions" value="7"/>
</dbReference>
<dbReference type="STRING" id="284812.Q09812"/>
<dbReference type="TCDB" id="2.A.1.24.2">
    <property type="family name" value="the major facilitator superfamily (mfs)"/>
</dbReference>
<dbReference type="GlyCosmos" id="Q09812">
    <property type="glycosylation" value="5 sites, No reported glycans"/>
</dbReference>
<dbReference type="iPTMnet" id="Q09812"/>
<dbReference type="PaxDb" id="4896-SPAC2G11.13.1"/>
<dbReference type="EnsemblFungi" id="SPAC2G11.13.1">
    <property type="protein sequence ID" value="SPAC2G11.13.1:pep"/>
    <property type="gene ID" value="SPAC2G11.13"/>
</dbReference>
<dbReference type="GeneID" id="2541826"/>
<dbReference type="KEGG" id="spo:2541826"/>
<dbReference type="PomBase" id="SPAC2G11.13">
    <property type="gene designation" value="atg22"/>
</dbReference>
<dbReference type="VEuPathDB" id="FungiDB:SPAC2G11.13"/>
<dbReference type="eggNOG" id="ENOG502QR9I">
    <property type="taxonomic scope" value="Eukaryota"/>
</dbReference>
<dbReference type="HOGENOM" id="CLU_017518_1_0_1"/>
<dbReference type="InParanoid" id="Q09812"/>
<dbReference type="OMA" id="QPWEIFP"/>
<dbReference type="PhylomeDB" id="Q09812"/>
<dbReference type="PRO" id="PR:Q09812"/>
<dbReference type="Proteomes" id="UP000002485">
    <property type="component" value="Chromosome I"/>
</dbReference>
<dbReference type="GO" id="GO:0000329">
    <property type="term" value="C:fungal-type vacuole membrane"/>
    <property type="evidence" value="ECO:0000314"/>
    <property type="project" value="PomBase"/>
</dbReference>
<dbReference type="GO" id="GO:0034639">
    <property type="term" value="F:L-amino acid efflux transmembrane transporter activity"/>
    <property type="evidence" value="ECO:0000266"/>
    <property type="project" value="PomBase"/>
</dbReference>
<dbReference type="GO" id="GO:0015179">
    <property type="term" value="F:L-amino acid transmembrane transporter activity"/>
    <property type="evidence" value="ECO:0000315"/>
    <property type="project" value="PomBase"/>
</dbReference>
<dbReference type="GO" id="GO:0032974">
    <property type="term" value="P:amino acid transmembrane export from vacuole"/>
    <property type="evidence" value="ECO:0000318"/>
    <property type="project" value="GO_Central"/>
</dbReference>
<dbReference type="GO" id="GO:0006914">
    <property type="term" value="P:autophagy"/>
    <property type="evidence" value="ECO:0007669"/>
    <property type="project" value="UniProtKB-KW"/>
</dbReference>
<dbReference type="GO" id="GO:1902475">
    <property type="term" value="P:L-alpha-amino acid transmembrane transport"/>
    <property type="evidence" value="ECO:0000315"/>
    <property type="project" value="PomBase"/>
</dbReference>
<dbReference type="CDD" id="cd17483">
    <property type="entry name" value="MFS_Atg22_like"/>
    <property type="match status" value="1"/>
</dbReference>
<dbReference type="InterPro" id="IPR044738">
    <property type="entry name" value="Atg22"/>
</dbReference>
<dbReference type="InterPro" id="IPR024671">
    <property type="entry name" value="Atg22-like"/>
</dbReference>
<dbReference type="InterPro" id="IPR050495">
    <property type="entry name" value="ATG22/LtaA_families"/>
</dbReference>
<dbReference type="InterPro" id="IPR036259">
    <property type="entry name" value="MFS_trans_sf"/>
</dbReference>
<dbReference type="PANTHER" id="PTHR23519">
    <property type="entry name" value="AUTOPHAGY-RELATED PROTEIN 22"/>
    <property type="match status" value="1"/>
</dbReference>
<dbReference type="PANTHER" id="PTHR23519:SF1">
    <property type="entry name" value="AUTOPHAGY-RELATED PROTEIN 22"/>
    <property type="match status" value="1"/>
</dbReference>
<dbReference type="Pfam" id="PF11700">
    <property type="entry name" value="ATG22"/>
    <property type="match status" value="1"/>
</dbReference>
<dbReference type="SUPFAM" id="SSF103473">
    <property type="entry name" value="MFS general substrate transporter"/>
    <property type="match status" value="1"/>
</dbReference>
<protein>
    <recommendedName>
        <fullName>Autophagy-related protein 22</fullName>
    </recommendedName>
</protein>
<reference key="1">
    <citation type="journal article" date="2002" name="Nature">
        <title>The genome sequence of Schizosaccharomyces pombe.</title>
        <authorList>
            <person name="Wood V."/>
            <person name="Gwilliam R."/>
            <person name="Rajandream M.A."/>
            <person name="Lyne M.H."/>
            <person name="Lyne R."/>
            <person name="Stewart A."/>
            <person name="Sgouros J.G."/>
            <person name="Peat N."/>
            <person name="Hayles J."/>
            <person name="Baker S.G."/>
            <person name="Basham D."/>
            <person name="Bowman S."/>
            <person name="Brooks K."/>
            <person name="Brown D."/>
            <person name="Brown S."/>
            <person name="Chillingworth T."/>
            <person name="Churcher C.M."/>
            <person name="Collins M."/>
            <person name="Connor R."/>
            <person name="Cronin A."/>
            <person name="Davis P."/>
            <person name="Feltwell T."/>
            <person name="Fraser A."/>
            <person name="Gentles S."/>
            <person name="Goble A."/>
            <person name="Hamlin N."/>
            <person name="Harris D.E."/>
            <person name="Hidalgo J."/>
            <person name="Hodgson G."/>
            <person name="Holroyd S."/>
            <person name="Hornsby T."/>
            <person name="Howarth S."/>
            <person name="Huckle E.J."/>
            <person name="Hunt S."/>
            <person name="Jagels K."/>
            <person name="James K.D."/>
            <person name="Jones L."/>
            <person name="Jones M."/>
            <person name="Leather S."/>
            <person name="McDonald S."/>
            <person name="McLean J."/>
            <person name="Mooney P."/>
            <person name="Moule S."/>
            <person name="Mungall K.L."/>
            <person name="Murphy L.D."/>
            <person name="Niblett D."/>
            <person name="Odell C."/>
            <person name="Oliver K."/>
            <person name="O'Neil S."/>
            <person name="Pearson D."/>
            <person name="Quail M.A."/>
            <person name="Rabbinowitsch E."/>
            <person name="Rutherford K.M."/>
            <person name="Rutter S."/>
            <person name="Saunders D."/>
            <person name="Seeger K."/>
            <person name="Sharp S."/>
            <person name="Skelton J."/>
            <person name="Simmonds M.N."/>
            <person name="Squares R."/>
            <person name="Squares S."/>
            <person name="Stevens K."/>
            <person name="Taylor K."/>
            <person name="Taylor R.G."/>
            <person name="Tivey A."/>
            <person name="Walsh S.V."/>
            <person name="Warren T."/>
            <person name="Whitehead S."/>
            <person name="Woodward J.R."/>
            <person name="Volckaert G."/>
            <person name="Aert R."/>
            <person name="Robben J."/>
            <person name="Grymonprez B."/>
            <person name="Weltjens I."/>
            <person name="Vanstreels E."/>
            <person name="Rieger M."/>
            <person name="Schaefer M."/>
            <person name="Mueller-Auer S."/>
            <person name="Gabel C."/>
            <person name="Fuchs M."/>
            <person name="Duesterhoeft A."/>
            <person name="Fritzc C."/>
            <person name="Holzer E."/>
            <person name="Moestl D."/>
            <person name="Hilbert H."/>
            <person name="Borzym K."/>
            <person name="Langer I."/>
            <person name="Beck A."/>
            <person name="Lehrach H."/>
            <person name="Reinhardt R."/>
            <person name="Pohl T.M."/>
            <person name="Eger P."/>
            <person name="Zimmermann W."/>
            <person name="Wedler H."/>
            <person name="Wambutt R."/>
            <person name="Purnelle B."/>
            <person name="Goffeau A."/>
            <person name="Cadieu E."/>
            <person name="Dreano S."/>
            <person name="Gloux S."/>
            <person name="Lelaure V."/>
            <person name="Mottier S."/>
            <person name="Galibert F."/>
            <person name="Aves S.J."/>
            <person name="Xiang Z."/>
            <person name="Hunt C."/>
            <person name="Moore K."/>
            <person name="Hurst S.M."/>
            <person name="Lucas M."/>
            <person name="Rochet M."/>
            <person name="Gaillardin C."/>
            <person name="Tallada V.A."/>
            <person name="Garzon A."/>
            <person name="Thode G."/>
            <person name="Daga R.R."/>
            <person name="Cruzado L."/>
            <person name="Jimenez J."/>
            <person name="Sanchez M."/>
            <person name="del Rey F."/>
            <person name="Benito J."/>
            <person name="Dominguez A."/>
            <person name="Revuelta J.L."/>
            <person name="Moreno S."/>
            <person name="Armstrong J."/>
            <person name="Forsburg S.L."/>
            <person name="Cerutti L."/>
            <person name="Lowe T."/>
            <person name="McCombie W.R."/>
            <person name="Paulsen I."/>
            <person name="Potashkin J."/>
            <person name="Shpakovski G.V."/>
            <person name="Ussery D."/>
            <person name="Barrell B.G."/>
            <person name="Nurse P."/>
        </authorList>
    </citation>
    <scope>NUCLEOTIDE SEQUENCE [LARGE SCALE GENOMIC DNA]</scope>
    <source>
        <strain>972 / ATCC 24843</strain>
    </source>
</reference>
<reference key="2">
    <citation type="journal article" date="2011" name="Biosci. Biotechnol. Biochem.">
        <title>Atg22p, a vacuolar membrane protein involved in the amino acid compartmentalization of Schizosaccharomyces pombe.</title>
        <authorList>
            <person name="Sugimoto N."/>
            <person name="Iwaki T."/>
            <person name="Chardwiriyapreecha S."/>
            <person name="Shimazu M."/>
            <person name="Kawano M."/>
            <person name="Sekito T."/>
            <person name="Takegawa K."/>
            <person name="Kakinuma Y."/>
        </authorList>
    </citation>
    <scope>SUBCELLULAR LOCATION</scope>
    <scope>FUNCTION</scope>
</reference>
<feature type="chain" id="PRO_0000207627" description="Autophagy-related protein 22">
    <location>
        <begin position="1"/>
        <end position="529"/>
    </location>
</feature>
<feature type="transmembrane region" description="Helical" evidence="1">
    <location>
        <begin position="25"/>
        <end position="45"/>
    </location>
</feature>
<feature type="transmembrane region" description="Helical" evidence="1">
    <location>
        <begin position="72"/>
        <end position="92"/>
    </location>
</feature>
<feature type="transmembrane region" description="Helical" evidence="1">
    <location>
        <begin position="130"/>
        <end position="150"/>
    </location>
</feature>
<feature type="transmembrane region" description="Helical" evidence="1">
    <location>
        <begin position="241"/>
        <end position="261"/>
    </location>
</feature>
<feature type="transmembrane region" description="Helical" evidence="1">
    <location>
        <begin position="269"/>
        <end position="289"/>
    </location>
</feature>
<feature type="transmembrane region" description="Helical" evidence="1">
    <location>
        <begin position="365"/>
        <end position="385"/>
    </location>
</feature>
<feature type="transmembrane region" description="Helical" evidence="1">
    <location>
        <begin position="397"/>
        <end position="417"/>
    </location>
</feature>
<feature type="transmembrane region" description="Helical" evidence="1">
    <location>
        <begin position="429"/>
        <end position="449"/>
    </location>
</feature>
<feature type="transmembrane region" description="Helical" evidence="1">
    <location>
        <begin position="467"/>
        <end position="487"/>
    </location>
</feature>
<feature type="transmembrane region" description="Helical" evidence="1">
    <location>
        <begin position="496"/>
        <end position="516"/>
    </location>
</feature>
<feature type="glycosylation site" description="N-linked (GlcNAc...) asparagine" evidence="1">
    <location>
        <position position="198"/>
    </location>
</feature>
<feature type="glycosylation site" description="N-linked (GlcNAc...) asparagine" evidence="1">
    <location>
        <position position="218"/>
    </location>
</feature>
<feature type="glycosylation site" description="N-linked (GlcNAc...) asparagine" evidence="1">
    <location>
        <position position="299"/>
    </location>
</feature>
<feature type="glycosylation site" description="N-linked (GlcNAc...) asparagine" evidence="1">
    <location>
        <position position="359"/>
    </location>
</feature>
<feature type="glycosylation site" description="N-linked (GlcNAc...) asparagine" evidence="1">
    <location>
        <position position="489"/>
    </location>
</feature>
<accession>Q09812</accession>